<feature type="signal peptide" description="Tat-type signal" evidence="1">
    <location>
        <begin position="1"/>
        <end position="44"/>
    </location>
</feature>
<feature type="chain" id="PRO_1000138711" description="Protein-methionine-sulfoxide reductase catalytic subunit MsrP" evidence="1">
    <location>
        <begin position="45"/>
        <end position="334"/>
    </location>
</feature>
<feature type="binding site" evidence="1">
    <location>
        <position position="88"/>
    </location>
    <ligand>
        <name>Mo-molybdopterin</name>
        <dbReference type="ChEBI" id="CHEBI:71302"/>
    </ligand>
</feature>
<feature type="binding site" evidence="1">
    <location>
        <begin position="91"/>
        <end position="92"/>
    </location>
    <ligand>
        <name>Mo-molybdopterin</name>
        <dbReference type="ChEBI" id="CHEBI:71302"/>
    </ligand>
</feature>
<feature type="binding site" evidence="1">
    <location>
        <position position="146"/>
    </location>
    <ligand>
        <name>Mo-molybdopterin</name>
        <dbReference type="ChEBI" id="CHEBI:71302"/>
    </ligand>
    <ligandPart>
        <name>Mo</name>
        <dbReference type="ChEBI" id="CHEBI:28685"/>
    </ligandPart>
</feature>
<feature type="binding site" evidence="1">
    <location>
        <position position="181"/>
    </location>
    <ligand>
        <name>Mo-molybdopterin</name>
        <dbReference type="ChEBI" id="CHEBI:71302"/>
    </ligand>
</feature>
<feature type="binding site" evidence="1">
    <location>
        <position position="233"/>
    </location>
    <ligand>
        <name>Mo-molybdopterin</name>
        <dbReference type="ChEBI" id="CHEBI:71302"/>
    </ligand>
</feature>
<feature type="binding site" evidence="1">
    <location>
        <position position="238"/>
    </location>
    <ligand>
        <name>Mo-molybdopterin</name>
        <dbReference type="ChEBI" id="CHEBI:71302"/>
    </ligand>
</feature>
<feature type="binding site" evidence="1">
    <location>
        <begin position="249"/>
        <end position="251"/>
    </location>
    <ligand>
        <name>Mo-molybdopterin</name>
        <dbReference type="ChEBI" id="CHEBI:71302"/>
    </ligand>
</feature>
<protein>
    <recommendedName>
        <fullName evidence="1">Protein-methionine-sulfoxide reductase catalytic subunit MsrP</fullName>
        <ecNumber evidence="1">1.8.5.-</ecNumber>
    </recommendedName>
</protein>
<keyword id="KW-0479">Metal-binding</keyword>
<keyword id="KW-0500">Molybdenum</keyword>
<keyword id="KW-0560">Oxidoreductase</keyword>
<keyword id="KW-0574">Periplasm</keyword>
<keyword id="KW-0732">Signal</keyword>
<comment type="function">
    <text evidence="1">Part of the MsrPQ system that repairs oxidized periplasmic proteins containing methionine sulfoxide residues (Met-O), using respiratory chain electrons. Thus protects these proteins from oxidative-stress damage caused by reactive species of oxygen and chlorine generated by the host defense mechanisms. MsrPQ is essential for the maintenance of envelope integrity under bleach stress, rescuing a wide series of structurally unrelated periplasmic proteins from methionine oxidation, including the primary periplasmic chaperone SurA and the lipoprotein Pal. The catalytic subunit MsrP is non-stereospecific, being able to reduce both (R-) and (S-) diastereoisomers of methionine sulfoxide.</text>
</comment>
<comment type="catalytic activity">
    <reaction evidence="1">
        <text>L-methionyl-[protein] + a quinone + H2O = L-methionyl-(S)-S-oxide-[protein] + a quinol</text>
        <dbReference type="Rhea" id="RHEA:51292"/>
        <dbReference type="Rhea" id="RHEA-COMP:12313"/>
        <dbReference type="Rhea" id="RHEA-COMP:12315"/>
        <dbReference type="ChEBI" id="CHEBI:15377"/>
        <dbReference type="ChEBI" id="CHEBI:16044"/>
        <dbReference type="ChEBI" id="CHEBI:24646"/>
        <dbReference type="ChEBI" id="CHEBI:44120"/>
        <dbReference type="ChEBI" id="CHEBI:132124"/>
    </reaction>
</comment>
<comment type="catalytic activity">
    <reaction evidence="1">
        <text>L-methionyl-[protein] + a quinone + H2O = L-methionyl-(R)-S-oxide-[protein] + a quinol</text>
        <dbReference type="Rhea" id="RHEA:51296"/>
        <dbReference type="Rhea" id="RHEA-COMP:12313"/>
        <dbReference type="Rhea" id="RHEA-COMP:12314"/>
        <dbReference type="ChEBI" id="CHEBI:15377"/>
        <dbReference type="ChEBI" id="CHEBI:16044"/>
        <dbReference type="ChEBI" id="CHEBI:24646"/>
        <dbReference type="ChEBI" id="CHEBI:45764"/>
        <dbReference type="ChEBI" id="CHEBI:132124"/>
    </reaction>
</comment>
<comment type="cofactor">
    <cofactor evidence="1">
        <name>Mo-molybdopterin</name>
        <dbReference type="ChEBI" id="CHEBI:71302"/>
    </cofactor>
    <text evidence="1">Binds 1 Mo-molybdopterin (Mo-MPT) cofactor per subunit.</text>
</comment>
<comment type="subunit">
    <text evidence="1">Heterodimer of a catalytic subunit (MsrP) and a heme-binding subunit (MsrQ).</text>
</comment>
<comment type="subcellular location">
    <subcellularLocation>
        <location evidence="1">Periplasm</location>
    </subcellularLocation>
    <text evidence="1">Is attached to the inner membrane when interacting with the MsrQ subunit.</text>
</comment>
<comment type="PTM">
    <text evidence="1">Predicted to be exported by the Tat system. The position of the signal peptide cleavage has not been experimentally proven.</text>
</comment>
<comment type="similarity">
    <text evidence="1">Belongs to the MsrP family.</text>
</comment>
<dbReference type="EC" id="1.8.5.-" evidence="1"/>
<dbReference type="EMBL" id="CU928164">
    <property type="protein sequence ID" value="CAR17220.1"/>
    <property type="molecule type" value="Genomic_DNA"/>
</dbReference>
<dbReference type="RefSeq" id="WP_000740067.1">
    <property type="nucleotide sequence ID" value="NC_011750.1"/>
</dbReference>
<dbReference type="RefSeq" id="YP_002407098.1">
    <property type="nucleotide sequence ID" value="NC_011750.1"/>
</dbReference>
<dbReference type="SMR" id="B7NRB1"/>
<dbReference type="STRING" id="585057.ECIAI39_1086"/>
<dbReference type="GeneID" id="86946884"/>
<dbReference type="KEGG" id="ect:ECIAI39_1086"/>
<dbReference type="PATRIC" id="fig|585057.6.peg.1136"/>
<dbReference type="HOGENOM" id="CLU_045520_0_0_6"/>
<dbReference type="Proteomes" id="UP000000749">
    <property type="component" value="Chromosome"/>
</dbReference>
<dbReference type="GO" id="GO:0042597">
    <property type="term" value="C:periplasmic space"/>
    <property type="evidence" value="ECO:0007669"/>
    <property type="project" value="UniProtKB-SubCell"/>
</dbReference>
<dbReference type="GO" id="GO:0046872">
    <property type="term" value="F:metal ion binding"/>
    <property type="evidence" value="ECO:0007669"/>
    <property type="project" value="UniProtKB-KW"/>
</dbReference>
<dbReference type="GO" id="GO:0043546">
    <property type="term" value="F:molybdopterin cofactor binding"/>
    <property type="evidence" value="ECO:0007669"/>
    <property type="project" value="UniProtKB-UniRule"/>
</dbReference>
<dbReference type="GO" id="GO:0016672">
    <property type="term" value="F:oxidoreductase activity, acting on a sulfur group of donors, quinone or similar compound as acceptor"/>
    <property type="evidence" value="ECO:0007669"/>
    <property type="project" value="UniProtKB-UniRule"/>
</dbReference>
<dbReference type="GO" id="GO:0030091">
    <property type="term" value="P:protein repair"/>
    <property type="evidence" value="ECO:0007669"/>
    <property type="project" value="UniProtKB-UniRule"/>
</dbReference>
<dbReference type="CDD" id="cd02107">
    <property type="entry name" value="YedY_like_Moco"/>
    <property type="match status" value="1"/>
</dbReference>
<dbReference type="FunFam" id="3.90.420.10:FF:000001">
    <property type="entry name" value="Protein-methionine-sulfoxide reductase catalytic subunit MsrP"/>
    <property type="match status" value="1"/>
</dbReference>
<dbReference type="Gene3D" id="3.90.420.10">
    <property type="entry name" value="Oxidoreductase, molybdopterin-binding domain"/>
    <property type="match status" value="1"/>
</dbReference>
<dbReference type="HAMAP" id="MF_01206">
    <property type="entry name" value="MsrP"/>
    <property type="match status" value="1"/>
</dbReference>
<dbReference type="InterPro" id="IPR022867">
    <property type="entry name" value="MsrP"/>
</dbReference>
<dbReference type="InterPro" id="IPR000572">
    <property type="entry name" value="OxRdtase_Mopterin-bd_dom"/>
</dbReference>
<dbReference type="InterPro" id="IPR036374">
    <property type="entry name" value="OxRdtase_Mopterin-bd_sf"/>
</dbReference>
<dbReference type="InterPro" id="IPR006311">
    <property type="entry name" value="TAT_signal"/>
</dbReference>
<dbReference type="NCBIfam" id="NF003767">
    <property type="entry name" value="PRK05363.1"/>
    <property type="match status" value="1"/>
</dbReference>
<dbReference type="PANTHER" id="PTHR43032">
    <property type="entry name" value="PROTEIN-METHIONINE-SULFOXIDE REDUCTASE"/>
    <property type="match status" value="1"/>
</dbReference>
<dbReference type="PANTHER" id="PTHR43032:SF3">
    <property type="entry name" value="PROTEIN-METHIONINE-SULFOXIDE REDUCTASE CATALYTIC SUBUNIT MSRP"/>
    <property type="match status" value="1"/>
</dbReference>
<dbReference type="Pfam" id="PF00174">
    <property type="entry name" value="Oxidored_molyb"/>
    <property type="match status" value="1"/>
</dbReference>
<dbReference type="SUPFAM" id="SSF56524">
    <property type="entry name" value="Oxidoreductase molybdopterin-binding domain"/>
    <property type="match status" value="1"/>
</dbReference>
<dbReference type="PROSITE" id="PS51318">
    <property type="entry name" value="TAT"/>
    <property type="match status" value="1"/>
</dbReference>
<proteinExistence type="inferred from homology"/>
<evidence type="ECO:0000255" key="1">
    <source>
        <dbReference type="HAMAP-Rule" id="MF_01206"/>
    </source>
</evidence>
<organism>
    <name type="scientific">Escherichia coli O7:K1 (strain IAI39 / ExPEC)</name>
    <dbReference type="NCBI Taxonomy" id="585057"/>
    <lineage>
        <taxon>Bacteria</taxon>
        <taxon>Pseudomonadati</taxon>
        <taxon>Pseudomonadota</taxon>
        <taxon>Gammaproteobacteria</taxon>
        <taxon>Enterobacterales</taxon>
        <taxon>Enterobacteriaceae</taxon>
        <taxon>Escherichia</taxon>
    </lineage>
</organism>
<reference key="1">
    <citation type="journal article" date="2009" name="PLoS Genet.">
        <title>Organised genome dynamics in the Escherichia coli species results in highly diverse adaptive paths.</title>
        <authorList>
            <person name="Touchon M."/>
            <person name="Hoede C."/>
            <person name="Tenaillon O."/>
            <person name="Barbe V."/>
            <person name="Baeriswyl S."/>
            <person name="Bidet P."/>
            <person name="Bingen E."/>
            <person name="Bonacorsi S."/>
            <person name="Bouchier C."/>
            <person name="Bouvet O."/>
            <person name="Calteau A."/>
            <person name="Chiapello H."/>
            <person name="Clermont O."/>
            <person name="Cruveiller S."/>
            <person name="Danchin A."/>
            <person name="Diard M."/>
            <person name="Dossat C."/>
            <person name="Karoui M.E."/>
            <person name="Frapy E."/>
            <person name="Garry L."/>
            <person name="Ghigo J.M."/>
            <person name="Gilles A.M."/>
            <person name="Johnson J."/>
            <person name="Le Bouguenec C."/>
            <person name="Lescat M."/>
            <person name="Mangenot S."/>
            <person name="Martinez-Jehanne V."/>
            <person name="Matic I."/>
            <person name="Nassif X."/>
            <person name="Oztas S."/>
            <person name="Petit M.A."/>
            <person name="Pichon C."/>
            <person name="Rouy Z."/>
            <person name="Ruf C.S."/>
            <person name="Schneider D."/>
            <person name="Tourret J."/>
            <person name="Vacherie B."/>
            <person name="Vallenet D."/>
            <person name="Medigue C."/>
            <person name="Rocha E.P.C."/>
            <person name="Denamur E."/>
        </authorList>
    </citation>
    <scope>NUCLEOTIDE SEQUENCE [LARGE SCALE GENOMIC DNA]</scope>
    <source>
        <strain>IAI39 / ExPEC</strain>
    </source>
</reference>
<name>MSRP_ECO7I</name>
<gene>
    <name evidence="1" type="primary">msrP</name>
    <name type="ordered locus">ECIAI39_1086</name>
</gene>
<accession>B7NRB1</accession>
<sequence length="334" mass="37417">MKKNQFLKESDVTAESVFFMKRRQVLKALGISAAAFSLPHAAHADLLSWFKGNDRPPAPAGKPLEFSKPAAWQNNLPLTPADKVSGYNNFYEFGLDKADPAANAGSLKTDPWTLKISGEVAKPLTLDHDDLTRRFPLEERIYRMRCVEAWSMVVPWIGFPLHKLLALAEPTSNAKYVAFETIYAPEQMPGQQDRFIGGGLKYPYVEGLRLDEAMHPLTLMTVGVYGKALPPQNGAPVRLIVPWKYGFKGIKSIVSIKLTRERPPTTWNLAAPDEYGFYANVNPHVDHPRWSQATERFIGSGGILDVQRQPTLLFNGYADQVASLYRGLDLRENF</sequence>